<reference key="1">
    <citation type="journal article" date="2009" name="Appl. Environ. Microbiol.">
        <title>Metabolic versatility and indigenous origin of the archaeon Thermococcus sibiricus, isolated from a siberian oil reservoir, as revealed by genome analysis.</title>
        <authorList>
            <person name="Mardanov A.V."/>
            <person name="Ravin N.V."/>
            <person name="Svetlitchnyi V.A."/>
            <person name="Beletsky A.V."/>
            <person name="Miroshnichenko M.L."/>
            <person name="Bonch-Osmolovskaya E.A."/>
            <person name="Skryabin K.G."/>
        </authorList>
    </citation>
    <scope>NUCLEOTIDE SEQUENCE [LARGE SCALE GENOMIC DNA]</scope>
    <source>
        <strain>DSM 12597 / MM 739</strain>
    </source>
</reference>
<sequence>MGKIVRVTGPLVVADEMRGSRMYEVVRVGELGLIGEIIRLEGDKAVIQVYEETAGIKPGEPVMGTGASLSVELGPGLLTSIYDGIQRPLEILRSQSGDFIGRGLTAPALSRDKKWHFTPKVKVGDKVVGGDIIGVVPETSIIEHKIMIPPEIEGEIIEIVGEGDYTIEEVIAKVKAPNGEIKEVRMYQRWPVRMKRPYKQKLPPEVPLVTGQRTIDTFFPQAKGGTAAIPGPFGSGKTVTQHQLAKWSDAEVVVYIGCGERGNEMTDVLEEFPKLKDPRTGKPLMERTVLIANTSNMPVAAREASIYTGITIAEYFRDMGYNVALMADSTSRWAEALREISGRLEEMPGEEGYPAYLASKVAEFYERAGRVRTLGSDDRIGSVSVIGAVSPPGGDLSDPVVQNTLRVVKVFWALDADLARRRHFPAINWLTSYSLYVDSIKDWWQNNVDPEWKAMRDEAMALLQKESELEEIVRIVGPDALPEREKAILLVARMLREDYLQQDAFHEVDTYCLPKKQVTMMRVILNFYRHTMRAIDAGIPVEEIAKLPVREEIGRMKYNPNIEEIAVLMEKTKEQFEELFKKYGE</sequence>
<feature type="chain" id="PRO_1000205039" description="A-type ATP synthase subunit A">
    <location>
        <begin position="1"/>
        <end position="585"/>
    </location>
</feature>
<feature type="binding site" evidence="1">
    <location>
        <begin position="231"/>
        <end position="238"/>
    </location>
    <ligand>
        <name>ATP</name>
        <dbReference type="ChEBI" id="CHEBI:30616"/>
    </ligand>
</feature>
<dbReference type="EC" id="7.1.2.2" evidence="1"/>
<dbReference type="EMBL" id="CP001463">
    <property type="protein sequence ID" value="ACS90843.1"/>
    <property type="molecule type" value="Genomic_DNA"/>
</dbReference>
<dbReference type="RefSeq" id="WP_015850059.1">
    <property type="nucleotide sequence ID" value="NC_012883.1"/>
</dbReference>
<dbReference type="SMR" id="C6A5E8"/>
<dbReference type="STRING" id="604354.TSIB_1792"/>
<dbReference type="GeneID" id="8096802"/>
<dbReference type="KEGG" id="tsi:TSIB_1792"/>
<dbReference type="eggNOG" id="arCOG00868">
    <property type="taxonomic scope" value="Archaea"/>
</dbReference>
<dbReference type="HOGENOM" id="CLU_008162_3_1_2"/>
<dbReference type="OrthoDB" id="115235at2157"/>
<dbReference type="Proteomes" id="UP000009079">
    <property type="component" value="Chromosome"/>
</dbReference>
<dbReference type="GO" id="GO:0005886">
    <property type="term" value="C:plasma membrane"/>
    <property type="evidence" value="ECO:0007669"/>
    <property type="project" value="UniProtKB-SubCell"/>
</dbReference>
<dbReference type="GO" id="GO:0033178">
    <property type="term" value="C:proton-transporting two-sector ATPase complex, catalytic domain"/>
    <property type="evidence" value="ECO:0007669"/>
    <property type="project" value="InterPro"/>
</dbReference>
<dbReference type="GO" id="GO:0005524">
    <property type="term" value="F:ATP binding"/>
    <property type="evidence" value="ECO:0007669"/>
    <property type="project" value="UniProtKB-UniRule"/>
</dbReference>
<dbReference type="GO" id="GO:0016887">
    <property type="term" value="F:ATP hydrolysis activity"/>
    <property type="evidence" value="ECO:0007669"/>
    <property type="project" value="InterPro"/>
</dbReference>
<dbReference type="GO" id="GO:0046933">
    <property type="term" value="F:proton-transporting ATP synthase activity, rotational mechanism"/>
    <property type="evidence" value="ECO:0007669"/>
    <property type="project" value="UniProtKB-UniRule"/>
</dbReference>
<dbReference type="GO" id="GO:0046961">
    <property type="term" value="F:proton-transporting ATPase activity, rotational mechanism"/>
    <property type="evidence" value="ECO:0007669"/>
    <property type="project" value="InterPro"/>
</dbReference>
<dbReference type="GO" id="GO:0042777">
    <property type="term" value="P:proton motive force-driven plasma membrane ATP synthesis"/>
    <property type="evidence" value="ECO:0007669"/>
    <property type="project" value="UniProtKB-UniRule"/>
</dbReference>
<dbReference type="CDD" id="cd18111">
    <property type="entry name" value="ATP-synt_V_A-type_alpha_C"/>
    <property type="match status" value="1"/>
</dbReference>
<dbReference type="CDD" id="cd18119">
    <property type="entry name" value="ATP-synt_V_A-type_alpha_N"/>
    <property type="match status" value="1"/>
</dbReference>
<dbReference type="CDD" id="cd01134">
    <property type="entry name" value="V_A-ATPase_A"/>
    <property type="match status" value="1"/>
</dbReference>
<dbReference type="FunFam" id="3.40.50.300:FF:000675">
    <property type="entry name" value="V-type ATP synthase alpha chain"/>
    <property type="match status" value="1"/>
</dbReference>
<dbReference type="FunFam" id="1.10.1140.10:FF:000002">
    <property type="entry name" value="V-type proton ATPase catalytic subunit A"/>
    <property type="match status" value="1"/>
</dbReference>
<dbReference type="FunFam" id="2.40.30.20:FF:000002">
    <property type="entry name" value="V-type proton ATPase catalytic subunit A"/>
    <property type="match status" value="1"/>
</dbReference>
<dbReference type="FunFam" id="2.40.50.100:FF:000008">
    <property type="entry name" value="V-type proton ATPase catalytic subunit A"/>
    <property type="match status" value="1"/>
</dbReference>
<dbReference type="Gene3D" id="2.40.30.20">
    <property type="match status" value="1"/>
</dbReference>
<dbReference type="Gene3D" id="2.40.50.100">
    <property type="match status" value="1"/>
</dbReference>
<dbReference type="Gene3D" id="1.10.1140.10">
    <property type="entry name" value="Bovine Mitochondrial F1-atpase, Atp Synthase Beta Chain, Chain D, domain 3"/>
    <property type="match status" value="1"/>
</dbReference>
<dbReference type="Gene3D" id="3.40.50.300">
    <property type="entry name" value="P-loop containing nucleotide triphosphate hydrolases"/>
    <property type="match status" value="1"/>
</dbReference>
<dbReference type="HAMAP" id="MF_00309">
    <property type="entry name" value="ATP_synth_A_arch"/>
    <property type="match status" value="1"/>
</dbReference>
<dbReference type="InterPro" id="IPR003593">
    <property type="entry name" value="AAA+_ATPase"/>
</dbReference>
<dbReference type="InterPro" id="IPR055190">
    <property type="entry name" value="ATP-synt_VA_C"/>
</dbReference>
<dbReference type="InterPro" id="IPR031686">
    <property type="entry name" value="ATP-synth_a_Xtn"/>
</dbReference>
<dbReference type="InterPro" id="IPR023366">
    <property type="entry name" value="ATP_synth_asu-like_sf"/>
</dbReference>
<dbReference type="InterPro" id="IPR005726">
    <property type="entry name" value="ATP_synth_asu_arc"/>
</dbReference>
<dbReference type="InterPro" id="IPR020003">
    <property type="entry name" value="ATPase_a/bsu_AS"/>
</dbReference>
<dbReference type="InterPro" id="IPR004100">
    <property type="entry name" value="ATPase_F1/V1/A1_a/bsu_N"/>
</dbReference>
<dbReference type="InterPro" id="IPR036121">
    <property type="entry name" value="ATPase_F1/V1/A1_a/bsu_N_sf"/>
</dbReference>
<dbReference type="InterPro" id="IPR000194">
    <property type="entry name" value="ATPase_F1/V1/A1_a/bsu_nucl-bd"/>
</dbReference>
<dbReference type="InterPro" id="IPR024034">
    <property type="entry name" value="ATPase_F1/V1_b/a_C"/>
</dbReference>
<dbReference type="InterPro" id="IPR027417">
    <property type="entry name" value="P-loop_NTPase"/>
</dbReference>
<dbReference type="InterPro" id="IPR022878">
    <property type="entry name" value="V-ATPase_asu"/>
</dbReference>
<dbReference type="NCBIfam" id="TIGR01043">
    <property type="entry name" value="ATP_syn_A_arch"/>
    <property type="match status" value="1"/>
</dbReference>
<dbReference type="NCBIfam" id="NF003220">
    <property type="entry name" value="PRK04192.1"/>
    <property type="match status" value="1"/>
</dbReference>
<dbReference type="PANTHER" id="PTHR43607:SF1">
    <property type="entry name" value="H(+)-TRANSPORTING TWO-SECTOR ATPASE"/>
    <property type="match status" value="1"/>
</dbReference>
<dbReference type="PANTHER" id="PTHR43607">
    <property type="entry name" value="V-TYPE PROTON ATPASE CATALYTIC SUBUNIT A"/>
    <property type="match status" value="1"/>
</dbReference>
<dbReference type="Pfam" id="PF00006">
    <property type="entry name" value="ATP-synt_ab"/>
    <property type="match status" value="1"/>
</dbReference>
<dbReference type="Pfam" id="PF02874">
    <property type="entry name" value="ATP-synt_ab_N"/>
    <property type="match status" value="1"/>
</dbReference>
<dbReference type="Pfam" id="PF16886">
    <property type="entry name" value="ATP-synt_ab_Xtn"/>
    <property type="match status" value="1"/>
</dbReference>
<dbReference type="Pfam" id="PF22919">
    <property type="entry name" value="ATP-synt_VA_C"/>
    <property type="match status" value="1"/>
</dbReference>
<dbReference type="SMART" id="SM00382">
    <property type="entry name" value="AAA"/>
    <property type="match status" value="1"/>
</dbReference>
<dbReference type="SUPFAM" id="SSF47917">
    <property type="entry name" value="C-terminal domain of alpha and beta subunits of F1 ATP synthase"/>
    <property type="match status" value="1"/>
</dbReference>
<dbReference type="SUPFAM" id="SSF50615">
    <property type="entry name" value="N-terminal domain of alpha and beta subunits of F1 ATP synthase"/>
    <property type="match status" value="1"/>
</dbReference>
<dbReference type="SUPFAM" id="SSF52540">
    <property type="entry name" value="P-loop containing nucleoside triphosphate hydrolases"/>
    <property type="match status" value="1"/>
</dbReference>
<dbReference type="PROSITE" id="PS00152">
    <property type="entry name" value="ATPASE_ALPHA_BETA"/>
    <property type="match status" value="1"/>
</dbReference>
<name>AATA_THESM</name>
<keyword id="KW-0066">ATP synthesis</keyword>
<keyword id="KW-0067">ATP-binding</keyword>
<keyword id="KW-1003">Cell membrane</keyword>
<keyword id="KW-0375">Hydrogen ion transport</keyword>
<keyword id="KW-0406">Ion transport</keyword>
<keyword id="KW-0472">Membrane</keyword>
<keyword id="KW-0547">Nucleotide-binding</keyword>
<keyword id="KW-1185">Reference proteome</keyword>
<keyword id="KW-1278">Translocase</keyword>
<keyword id="KW-0813">Transport</keyword>
<comment type="function">
    <text evidence="1">Component of the A-type ATP synthase that produces ATP from ADP in the presence of a proton gradient across the membrane. The A chain is the catalytic subunit.</text>
</comment>
<comment type="catalytic activity">
    <reaction evidence="1">
        <text>ATP + H2O + 4 H(+)(in) = ADP + phosphate + 5 H(+)(out)</text>
        <dbReference type="Rhea" id="RHEA:57720"/>
        <dbReference type="ChEBI" id="CHEBI:15377"/>
        <dbReference type="ChEBI" id="CHEBI:15378"/>
        <dbReference type="ChEBI" id="CHEBI:30616"/>
        <dbReference type="ChEBI" id="CHEBI:43474"/>
        <dbReference type="ChEBI" id="CHEBI:456216"/>
        <dbReference type="EC" id="7.1.2.2"/>
    </reaction>
</comment>
<comment type="subunit">
    <text evidence="1">Has multiple subunits with at least A(3), B(3), C, D, E, F, H, I and proteolipid K(x).</text>
</comment>
<comment type="subcellular location">
    <subcellularLocation>
        <location evidence="1">Cell membrane</location>
        <topology evidence="1">Peripheral membrane protein</topology>
    </subcellularLocation>
</comment>
<comment type="similarity">
    <text evidence="1">Belongs to the ATPase alpha/beta chains family.</text>
</comment>
<gene>
    <name evidence="1" type="primary">atpA</name>
    <name type="ordered locus">TSIB_1792</name>
</gene>
<evidence type="ECO:0000255" key="1">
    <source>
        <dbReference type="HAMAP-Rule" id="MF_00309"/>
    </source>
</evidence>
<protein>
    <recommendedName>
        <fullName evidence="1">A-type ATP synthase subunit A</fullName>
        <ecNumber evidence="1">7.1.2.2</ecNumber>
    </recommendedName>
</protein>
<organism>
    <name type="scientific">Thermococcus sibiricus (strain DSM 12597 / MM 739)</name>
    <dbReference type="NCBI Taxonomy" id="604354"/>
    <lineage>
        <taxon>Archaea</taxon>
        <taxon>Methanobacteriati</taxon>
        <taxon>Methanobacteriota</taxon>
        <taxon>Thermococci</taxon>
        <taxon>Thermococcales</taxon>
        <taxon>Thermococcaceae</taxon>
        <taxon>Thermococcus</taxon>
    </lineage>
</organism>
<proteinExistence type="inferred from homology"/>
<accession>C6A5E8</accession>